<keyword id="KW-0004">4Fe-4S</keyword>
<keyword id="KW-0408">Iron</keyword>
<keyword id="KW-0411">Iron-sulfur</keyword>
<keyword id="KW-0456">Lyase</keyword>
<keyword id="KW-0479">Metal-binding</keyword>
<keyword id="KW-0949">S-adenosyl-L-methionine</keyword>
<keyword id="KW-0784">Thiamine biosynthesis</keyword>
<keyword id="KW-0862">Zinc</keyword>
<proteinExistence type="inferred from homology"/>
<protein>
    <recommendedName>
        <fullName evidence="1">Phosphomethylpyrimidine synthase</fullName>
        <ecNumber evidence="1">4.1.99.17</ecNumber>
    </recommendedName>
    <alternativeName>
        <fullName evidence="1">Hydroxymethylpyrimidine phosphate synthase</fullName>
        <shortName evidence="1">HMP-P synthase</shortName>
        <shortName evidence="1">HMP-phosphate synthase</shortName>
        <shortName evidence="1">HMPP synthase</shortName>
    </alternativeName>
    <alternativeName>
        <fullName evidence="1">Thiamine biosynthesis protein ThiC</fullName>
    </alternativeName>
</protein>
<name>THIC_ECOLC</name>
<reference key="1">
    <citation type="submission" date="2008-02" db="EMBL/GenBank/DDBJ databases">
        <title>Complete sequence of Escherichia coli C str. ATCC 8739.</title>
        <authorList>
            <person name="Copeland A."/>
            <person name="Lucas S."/>
            <person name="Lapidus A."/>
            <person name="Glavina del Rio T."/>
            <person name="Dalin E."/>
            <person name="Tice H."/>
            <person name="Bruce D."/>
            <person name="Goodwin L."/>
            <person name="Pitluck S."/>
            <person name="Kiss H."/>
            <person name="Brettin T."/>
            <person name="Detter J.C."/>
            <person name="Han C."/>
            <person name="Kuske C.R."/>
            <person name="Schmutz J."/>
            <person name="Larimer F."/>
            <person name="Land M."/>
            <person name="Hauser L."/>
            <person name="Kyrpides N."/>
            <person name="Mikhailova N."/>
            <person name="Ingram L."/>
            <person name="Richardson P."/>
        </authorList>
    </citation>
    <scope>NUCLEOTIDE SEQUENCE [LARGE SCALE GENOMIC DNA]</scope>
    <source>
        <strain>ATCC 8739 / DSM 1576 / NBRC 3972 / NCIMB 8545 / WDCM 00012 / Crooks</strain>
    </source>
</reference>
<feature type="chain" id="PRO_1000075437" description="Phosphomethylpyrimidine synthase">
    <location>
        <begin position="1"/>
        <end position="631"/>
    </location>
</feature>
<feature type="binding site" evidence="1">
    <location>
        <position position="239"/>
    </location>
    <ligand>
        <name>substrate</name>
    </ligand>
</feature>
<feature type="binding site" evidence="1">
    <location>
        <position position="268"/>
    </location>
    <ligand>
        <name>substrate</name>
    </ligand>
</feature>
<feature type="binding site" evidence="1">
    <location>
        <position position="297"/>
    </location>
    <ligand>
        <name>substrate</name>
    </ligand>
</feature>
<feature type="binding site" evidence="1">
    <location>
        <position position="333"/>
    </location>
    <ligand>
        <name>substrate</name>
    </ligand>
</feature>
<feature type="binding site" evidence="1">
    <location>
        <begin position="353"/>
        <end position="355"/>
    </location>
    <ligand>
        <name>substrate</name>
    </ligand>
</feature>
<feature type="binding site" evidence="1">
    <location>
        <begin position="394"/>
        <end position="397"/>
    </location>
    <ligand>
        <name>substrate</name>
    </ligand>
</feature>
<feature type="binding site" evidence="1">
    <location>
        <position position="433"/>
    </location>
    <ligand>
        <name>substrate</name>
    </ligand>
</feature>
<feature type="binding site" evidence="1">
    <location>
        <position position="437"/>
    </location>
    <ligand>
        <name>Zn(2+)</name>
        <dbReference type="ChEBI" id="CHEBI:29105"/>
    </ligand>
</feature>
<feature type="binding site" evidence="1">
    <location>
        <position position="460"/>
    </location>
    <ligand>
        <name>substrate</name>
    </ligand>
</feature>
<feature type="binding site" evidence="1">
    <location>
        <position position="501"/>
    </location>
    <ligand>
        <name>Zn(2+)</name>
        <dbReference type="ChEBI" id="CHEBI:29105"/>
    </ligand>
</feature>
<feature type="binding site" evidence="1">
    <location>
        <position position="581"/>
    </location>
    <ligand>
        <name>[4Fe-4S] cluster</name>
        <dbReference type="ChEBI" id="CHEBI:49883"/>
        <note>4Fe-4S-S-AdoMet</note>
    </ligand>
</feature>
<feature type="binding site" evidence="1">
    <location>
        <position position="584"/>
    </location>
    <ligand>
        <name>[4Fe-4S] cluster</name>
        <dbReference type="ChEBI" id="CHEBI:49883"/>
        <note>4Fe-4S-S-AdoMet</note>
    </ligand>
</feature>
<feature type="binding site" evidence="1">
    <location>
        <position position="589"/>
    </location>
    <ligand>
        <name>[4Fe-4S] cluster</name>
        <dbReference type="ChEBI" id="CHEBI:49883"/>
        <note>4Fe-4S-S-AdoMet</note>
    </ligand>
</feature>
<organism>
    <name type="scientific">Escherichia coli (strain ATCC 8739 / DSM 1576 / NBRC 3972 / NCIMB 8545 / WDCM 00012 / Crooks)</name>
    <dbReference type="NCBI Taxonomy" id="481805"/>
    <lineage>
        <taxon>Bacteria</taxon>
        <taxon>Pseudomonadati</taxon>
        <taxon>Pseudomonadota</taxon>
        <taxon>Gammaproteobacteria</taxon>
        <taxon>Enterobacterales</taxon>
        <taxon>Enterobacteriaceae</taxon>
        <taxon>Escherichia</taxon>
    </lineage>
</organism>
<evidence type="ECO:0000255" key="1">
    <source>
        <dbReference type="HAMAP-Rule" id="MF_00089"/>
    </source>
</evidence>
<dbReference type="EC" id="4.1.99.17" evidence="1"/>
<dbReference type="EMBL" id="CP000946">
    <property type="protein sequence ID" value="ACA79630.1"/>
    <property type="molecule type" value="Genomic_DNA"/>
</dbReference>
<dbReference type="RefSeq" id="WP_001276928.1">
    <property type="nucleotide sequence ID" value="NZ_MTFT01000025.1"/>
</dbReference>
<dbReference type="SMR" id="B1IUQ3"/>
<dbReference type="KEGG" id="ecl:EcolC_4031"/>
<dbReference type="HOGENOM" id="CLU_013181_2_1_6"/>
<dbReference type="UniPathway" id="UPA00060"/>
<dbReference type="GO" id="GO:0005829">
    <property type="term" value="C:cytosol"/>
    <property type="evidence" value="ECO:0007669"/>
    <property type="project" value="TreeGrafter"/>
</dbReference>
<dbReference type="GO" id="GO:0051539">
    <property type="term" value="F:4 iron, 4 sulfur cluster binding"/>
    <property type="evidence" value="ECO:0007669"/>
    <property type="project" value="UniProtKB-KW"/>
</dbReference>
<dbReference type="GO" id="GO:0016830">
    <property type="term" value="F:carbon-carbon lyase activity"/>
    <property type="evidence" value="ECO:0007669"/>
    <property type="project" value="InterPro"/>
</dbReference>
<dbReference type="GO" id="GO:0008270">
    <property type="term" value="F:zinc ion binding"/>
    <property type="evidence" value="ECO:0007669"/>
    <property type="project" value="UniProtKB-UniRule"/>
</dbReference>
<dbReference type="GO" id="GO:0009228">
    <property type="term" value="P:thiamine biosynthetic process"/>
    <property type="evidence" value="ECO:0007669"/>
    <property type="project" value="UniProtKB-KW"/>
</dbReference>
<dbReference type="GO" id="GO:0009229">
    <property type="term" value="P:thiamine diphosphate biosynthetic process"/>
    <property type="evidence" value="ECO:0007669"/>
    <property type="project" value="UniProtKB-UniRule"/>
</dbReference>
<dbReference type="FunFam" id="3.20.20.540:FF:000001">
    <property type="entry name" value="Phosphomethylpyrimidine synthase"/>
    <property type="match status" value="1"/>
</dbReference>
<dbReference type="Gene3D" id="6.10.250.620">
    <property type="match status" value="1"/>
</dbReference>
<dbReference type="Gene3D" id="3.20.20.540">
    <property type="entry name" value="Radical SAM ThiC family, central domain"/>
    <property type="match status" value="1"/>
</dbReference>
<dbReference type="HAMAP" id="MF_00089">
    <property type="entry name" value="ThiC"/>
    <property type="match status" value="1"/>
</dbReference>
<dbReference type="InterPro" id="IPR037509">
    <property type="entry name" value="ThiC"/>
</dbReference>
<dbReference type="InterPro" id="IPR025747">
    <property type="entry name" value="ThiC-associated_dom"/>
</dbReference>
<dbReference type="InterPro" id="IPR038521">
    <property type="entry name" value="ThiC/Bza_core_dom"/>
</dbReference>
<dbReference type="InterPro" id="IPR002817">
    <property type="entry name" value="ThiC/BzaA/B"/>
</dbReference>
<dbReference type="NCBIfam" id="NF006763">
    <property type="entry name" value="PRK09284.1"/>
    <property type="match status" value="1"/>
</dbReference>
<dbReference type="NCBIfam" id="NF009895">
    <property type="entry name" value="PRK13352.1"/>
    <property type="match status" value="1"/>
</dbReference>
<dbReference type="NCBIfam" id="TIGR00190">
    <property type="entry name" value="thiC"/>
    <property type="match status" value="1"/>
</dbReference>
<dbReference type="PANTHER" id="PTHR30557:SF1">
    <property type="entry name" value="PHOSPHOMETHYLPYRIMIDINE SYNTHASE, CHLOROPLASTIC"/>
    <property type="match status" value="1"/>
</dbReference>
<dbReference type="PANTHER" id="PTHR30557">
    <property type="entry name" value="THIAMINE BIOSYNTHESIS PROTEIN THIC"/>
    <property type="match status" value="1"/>
</dbReference>
<dbReference type="Pfam" id="PF13667">
    <property type="entry name" value="ThiC-associated"/>
    <property type="match status" value="1"/>
</dbReference>
<dbReference type="Pfam" id="PF01964">
    <property type="entry name" value="ThiC_Rad_SAM"/>
    <property type="match status" value="1"/>
</dbReference>
<dbReference type="SFLD" id="SFLDF00407">
    <property type="entry name" value="phosphomethylpyrimidine_syntha"/>
    <property type="match status" value="1"/>
</dbReference>
<dbReference type="SFLD" id="SFLDG01114">
    <property type="entry name" value="phosphomethylpyrimidine_syntha"/>
    <property type="match status" value="1"/>
</dbReference>
<dbReference type="SFLD" id="SFLDS00113">
    <property type="entry name" value="Radical_SAM_Phosphomethylpyrim"/>
    <property type="match status" value="1"/>
</dbReference>
<accession>B1IUQ3</accession>
<sequence>MSATKLTRREQRARAQHFIDTLEGTAFPNSKRIYITGTHPGVRVPMREIQLSPTLIGGSKEQPQYEENEAIPVYDTSGPYGDPQIAINVQQGLAKLRQPWIDARGDTEELTVRSSDYTKARLADDGLDELRFSGVLTPKRAKAGRRVTQLHYARQGIITPEMEFIAIRENMGRERIRSEVLRHQHPGMSFGARLPENITAEFVRDEVAAGRAIIPANINHPESEPMIIGRNFLVKVNANIGNSAVTSSIEEEVEKLVWSTRWGADTVMDLSTGRYIHETREWILRNSPVPIGTVPIYQALEKVNGIAEDLTWEAFRDTLLEQAEQGVDYFTIHAGVLLRYVPMTAKRLTGIVSRGGSIMAKWCLSHHQENFLYQHFREICEICAAYDVSLSLGDGLRPGSIQDANDEAQFAELHTLGELTKIAWEYDVQVMIEGPGHVPMQMIRRNMTEELEHCHEAPFYTLGPLTTDIAPGYDHFTSGIGAAMIGWFGCAMLCYVTPKEHLGLPNKEDVKQGLITYKIAAHAADLAKGHPGAQIRDNAMSKARFEFRWEDQFNLALDPFTARAYHDETLPQESGKVAHFCSMCGPKFCSMKISQEVRDYAATQTIEMGMADMSENFRARGGEIYLRKEEA</sequence>
<gene>
    <name evidence="1" type="primary">thiC</name>
    <name type="ordered locus">EcolC_4031</name>
</gene>
<comment type="function">
    <text evidence="1">Catalyzes the synthesis of the hydroxymethylpyrimidine phosphate (HMP-P) moiety of thiamine from aminoimidazole ribotide (AIR) in a radical S-adenosyl-L-methionine (SAM)-dependent reaction.</text>
</comment>
<comment type="catalytic activity">
    <reaction evidence="1">
        <text>5-amino-1-(5-phospho-beta-D-ribosyl)imidazole + S-adenosyl-L-methionine = 4-amino-2-methyl-5-(phosphooxymethyl)pyrimidine + CO + 5'-deoxyadenosine + formate + L-methionine + 3 H(+)</text>
        <dbReference type="Rhea" id="RHEA:24840"/>
        <dbReference type="ChEBI" id="CHEBI:15378"/>
        <dbReference type="ChEBI" id="CHEBI:15740"/>
        <dbReference type="ChEBI" id="CHEBI:17245"/>
        <dbReference type="ChEBI" id="CHEBI:17319"/>
        <dbReference type="ChEBI" id="CHEBI:57844"/>
        <dbReference type="ChEBI" id="CHEBI:58354"/>
        <dbReference type="ChEBI" id="CHEBI:59789"/>
        <dbReference type="ChEBI" id="CHEBI:137981"/>
        <dbReference type="EC" id="4.1.99.17"/>
    </reaction>
</comment>
<comment type="cofactor">
    <cofactor evidence="1">
        <name>[4Fe-4S] cluster</name>
        <dbReference type="ChEBI" id="CHEBI:49883"/>
    </cofactor>
    <text evidence="1">Binds 1 [4Fe-4S] cluster per subunit. The cluster is coordinated with 3 cysteines and an exchangeable S-adenosyl-L-methionine.</text>
</comment>
<comment type="pathway">
    <text evidence="1">Cofactor biosynthesis; thiamine diphosphate biosynthesis.</text>
</comment>
<comment type="subunit">
    <text evidence="1">Homodimer.</text>
</comment>
<comment type="similarity">
    <text evidence="1">Belongs to the ThiC family.</text>
</comment>